<comment type="function">
    <text evidence="1">Converts 2C-methyl-D-erythritol 2,4-cyclodiphosphate (ME-2,4cPP) into 1-hydroxy-2-methyl-2-(E)-butenyl 4-diphosphate.</text>
</comment>
<comment type="catalytic activity">
    <reaction evidence="1">
        <text>(2E)-4-hydroxy-3-methylbut-2-enyl diphosphate + oxidized [flavodoxin] + H2O + 2 H(+) = 2-C-methyl-D-erythritol 2,4-cyclic diphosphate + reduced [flavodoxin]</text>
        <dbReference type="Rhea" id="RHEA:43604"/>
        <dbReference type="Rhea" id="RHEA-COMP:10622"/>
        <dbReference type="Rhea" id="RHEA-COMP:10623"/>
        <dbReference type="ChEBI" id="CHEBI:15377"/>
        <dbReference type="ChEBI" id="CHEBI:15378"/>
        <dbReference type="ChEBI" id="CHEBI:57618"/>
        <dbReference type="ChEBI" id="CHEBI:58210"/>
        <dbReference type="ChEBI" id="CHEBI:58483"/>
        <dbReference type="ChEBI" id="CHEBI:128753"/>
        <dbReference type="EC" id="1.17.7.3"/>
    </reaction>
</comment>
<comment type="cofactor">
    <cofactor evidence="1">
        <name>[4Fe-4S] cluster</name>
        <dbReference type="ChEBI" id="CHEBI:49883"/>
    </cofactor>
    <text evidence="1">Binds 1 [4Fe-4S] cluster.</text>
</comment>
<comment type="pathway">
    <text evidence="1">Isoprenoid biosynthesis; isopentenyl diphosphate biosynthesis via DXP pathway; isopentenyl diphosphate from 1-deoxy-D-xylulose 5-phosphate: step 5/6.</text>
</comment>
<comment type="similarity">
    <text evidence="1">Belongs to the IspG family.</text>
</comment>
<gene>
    <name evidence="1" type="primary">ispG</name>
    <name type="ordered locus">Csal_2854</name>
</gene>
<dbReference type="EC" id="1.17.7.3" evidence="1"/>
<dbReference type="EMBL" id="CP000285">
    <property type="protein sequence ID" value="ABE60200.1"/>
    <property type="molecule type" value="Genomic_DNA"/>
</dbReference>
<dbReference type="RefSeq" id="WP_011508146.1">
    <property type="nucleotide sequence ID" value="NC_007963.1"/>
</dbReference>
<dbReference type="SMR" id="Q1QTK8"/>
<dbReference type="STRING" id="290398.Csal_2854"/>
<dbReference type="DNASU" id="4028656"/>
<dbReference type="GeneID" id="95335549"/>
<dbReference type="KEGG" id="csa:Csal_2854"/>
<dbReference type="eggNOG" id="COG0821">
    <property type="taxonomic scope" value="Bacteria"/>
</dbReference>
<dbReference type="HOGENOM" id="CLU_042258_0_0_6"/>
<dbReference type="OrthoDB" id="9803214at2"/>
<dbReference type="UniPathway" id="UPA00056">
    <property type="reaction ID" value="UER00096"/>
</dbReference>
<dbReference type="Proteomes" id="UP000000239">
    <property type="component" value="Chromosome"/>
</dbReference>
<dbReference type="GO" id="GO:0051539">
    <property type="term" value="F:4 iron, 4 sulfur cluster binding"/>
    <property type="evidence" value="ECO:0007669"/>
    <property type="project" value="UniProtKB-UniRule"/>
</dbReference>
<dbReference type="GO" id="GO:0046429">
    <property type="term" value="F:4-hydroxy-3-methylbut-2-en-1-yl diphosphate synthase activity (ferredoxin)"/>
    <property type="evidence" value="ECO:0007669"/>
    <property type="project" value="UniProtKB-UniRule"/>
</dbReference>
<dbReference type="GO" id="GO:0141197">
    <property type="term" value="F:4-hydroxy-3-methylbut-2-enyl-diphosphate synthase activity (flavodoxin)"/>
    <property type="evidence" value="ECO:0007669"/>
    <property type="project" value="UniProtKB-EC"/>
</dbReference>
<dbReference type="GO" id="GO:0005506">
    <property type="term" value="F:iron ion binding"/>
    <property type="evidence" value="ECO:0007669"/>
    <property type="project" value="InterPro"/>
</dbReference>
<dbReference type="GO" id="GO:0019288">
    <property type="term" value="P:isopentenyl diphosphate biosynthetic process, methylerythritol 4-phosphate pathway"/>
    <property type="evidence" value="ECO:0007669"/>
    <property type="project" value="UniProtKB-UniRule"/>
</dbReference>
<dbReference type="GO" id="GO:0016114">
    <property type="term" value="P:terpenoid biosynthetic process"/>
    <property type="evidence" value="ECO:0007669"/>
    <property type="project" value="InterPro"/>
</dbReference>
<dbReference type="FunFam" id="3.20.20.20:FF:000001">
    <property type="entry name" value="4-hydroxy-3-methylbut-2-en-1-yl diphosphate synthase (flavodoxin)"/>
    <property type="match status" value="1"/>
</dbReference>
<dbReference type="Gene3D" id="3.20.20.20">
    <property type="entry name" value="Dihydropteroate synthase-like"/>
    <property type="match status" value="1"/>
</dbReference>
<dbReference type="Gene3D" id="3.30.413.10">
    <property type="entry name" value="Sulfite Reductase Hemoprotein, domain 1"/>
    <property type="match status" value="1"/>
</dbReference>
<dbReference type="HAMAP" id="MF_00159">
    <property type="entry name" value="IspG"/>
    <property type="match status" value="1"/>
</dbReference>
<dbReference type="InterPro" id="IPR011005">
    <property type="entry name" value="Dihydropteroate_synth-like_sf"/>
</dbReference>
<dbReference type="InterPro" id="IPR016425">
    <property type="entry name" value="IspG_bac"/>
</dbReference>
<dbReference type="InterPro" id="IPR004588">
    <property type="entry name" value="IspG_bac-typ"/>
</dbReference>
<dbReference type="InterPro" id="IPR045854">
    <property type="entry name" value="NO2/SO3_Rdtase_4Fe4S_sf"/>
</dbReference>
<dbReference type="NCBIfam" id="TIGR00612">
    <property type="entry name" value="ispG_gcpE"/>
    <property type="match status" value="1"/>
</dbReference>
<dbReference type="NCBIfam" id="NF001540">
    <property type="entry name" value="PRK00366.1"/>
    <property type="match status" value="1"/>
</dbReference>
<dbReference type="PANTHER" id="PTHR30454">
    <property type="entry name" value="4-HYDROXY-3-METHYLBUT-2-EN-1-YL DIPHOSPHATE SYNTHASE"/>
    <property type="match status" value="1"/>
</dbReference>
<dbReference type="PANTHER" id="PTHR30454:SF0">
    <property type="entry name" value="4-HYDROXY-3-METHYLBUT-2-EN-1-YL DIPHOSPHATE SYNTHASE (FERREDOXIN), CHLOROPLASTIC"/>
    <property type="match status" value="1"/>
</dbReference>
<dbReference type="Pfam" id="PF04551">
    <property type="entry name" value="GcpE"/>
    <property type="match status" value="1"/>
</dbReference>
<dbReference type="PIRSF" id="PIRSF004640">
    <property type="entry name" value="IspG"/>
    <property type="match status" value="1"/>
</dbReference>
<dbReference type="SUPFAM" id="SSF51717">
    <property type="entry name" value="Dihydropteroate synthetase-like"/>
    <property type="match status" value="1"/>
</dbReference>
<dbReference type="SUPFAM" id="SSF56014">
    <property type="entry name" value="Nitrite and sulphite reductase 4Fe-4S domain-like"/>
    <property type="match status" value="1"/>
</dbReference>
<reference key="1">
    <citation type="journal article" date="2011" name="Stand. Genomic Sci.">
        <title>Complete genome sequence of the halophilic and highly halotolerant Chromohalobacter salexigens type strain (1H11(T)).</title>
        <authorList>
            <person name="Copeland A."/>
            <person name="O'Connor K."/>
            <person name="Lucas S."/>
            <person name="Lapidus A."/>
            <person name="Berry K.W."/>
            <person name="Detter J.C."/>
            <person name="Del Rio T.G."/>
            <person name="Hammon N."/>
            <person name="Dalin E."/>
            <person name="Tice H."/>
            <person name="Pitluck S."/>
            <person name="Bruce D."/>
            <person name="Goodwin L."/>
            <person name="Han C."/>
            <person name="Tapia R."/>
            <person name="Saunders E."/>
            <person name="Schmutz J."/>
            <person name="Brettin T."/>
            <person name="Larimer F."/>
            <person name="Land M."/>
            <person name="Hauser L."/>
            <person name="Vargas C."/>
            <person name="Nieto J.J."/>
            <person name="Kyrpides N.C."/>
            <person name="Ivanova N."/>
            <person name="Goker M."/>
            <person name="Klenk H.P."/>
            <person name="Csonka L.N."/>
            <person name="Woyke T."/>
        </authorList>
    </citation>
    <scope>NUCLEOTIDE SEQUENCE [LARGE SCALE GENOMIC DNA]</scope>
    <source>
        <strain>ATCC BAA-138 / DSM 3043 / CIP 106854 / NCIMB 13768 / 1H11</strain>
    </source>
</reference>
<name>ISPG_CHRSD</name>
<accession>Q1QTK8</accession>
<organism>
    <name type="scientific">Chromohalobacter salexigens (strain ATCC BAA-138 / DSM 3043 / CIP 106854 / NCIMB 13768 / 1H11)</name>
    <dbReference type="NCBI Taxonomy" id="290398"/>
    <lineage>
        <taxon>Bacteria</taxon>
        <taxon>Pseudomonadati</taxon>
        <taxon>Pseudomonadota</taxon>
        <taxon>Gammaproteobacteria</taxon>
        <taxon>Oceanospirillales</taxon>
        <taxon>Halomonadaceae</taxon>
        <taxon>Chromohalobacter</taxon>
    </lineage>
</organism>
<protein>
    <recommendedName>
        <fullName evidence="1">4-hydroxy-3-methylbut-2-en-1-yl diphosphate synthase (flavodoxin)</fullName>
        <ecNumber evidence="1">1.17.7.3</ecNumber>
    </recommendedName>
    <alternativeName>
        <fullName evidence="1">1-hydroxy-2-methyl-2-(E)-butenyl 4-diphosphate synthase</fullName>
    </alternativeName>
</protein>
<feature type="chain" id="PRO_1000011456" description="4-hydroxy-3-methylbut-2-en-1-yl diphosphate synthase (flavodoxin)">
    <location>
        <begin position="1"/>
        <end position="371"/>
    </location>
</feature>
<feature type="binding site" evidence="1">
    <location>
        <position position="270"/>
    </location>
    <ligand>
        <name>[4Fe-4S] cluster</name>
        <dbReference type="ChEBI" id="CHEBI:49883"/>
    </ligand>
</feature>
<feature type="binding site" evidence="1">
    <location>
        <position position="273"/>
    </location>
    <ligand>
        <name>[4Fe-4S] cluster</name>
        <dbReference type="ChEBI" id="CHEBI:49883"/>
    </ligand>
</feature>
<feature type="binding site" evidence="1">
    <location>
        <position position="305"/>
    </location>
    <ligand>
        <name>[4Fe-4S] cluster</name>
        <dbReference type="ChEBI" id="CHEBI:49883"/>
    </ligand>
</feature>
<feature type="binding site" evidence="1">
    <location>
        <position position="312"/>
    </location>
    <ligand>
        <name>[4Fe-4S] cluster</name>
        <dbReference type="ChEBI" id="CHEBI:49883"/>
    </ligand>
</feature>
<sequence length="371" mass="40379">MHMQSPIQRRKSRQIHVGHVPVGGDAPIAVQSMTNTDTLDVDATVAQIRQLEAAGADIVRVSVPTMDAAEAFGQIKRQVSVPLVADIHFDYKIALRVAELGVDCLRINPGNIGREDRVRAVVDAARHHGIPIRIGVNAGSLEKDLQKKYGEPTPEALVESAMRHIEHLDRLDFQDFKVSVKASDVFMAVAAYRQLAQRIDQPLHLGITEAGGLRSGTVKSSIGLGLLLMEGIGDTIRVSLAADPVEEIKVGYDMLKSLRLRSKGINFIACPSCSRQNFDVIGTMNALEERLDDIMTPLDVSVIGCVVNGPGEAKESDIGLTGGDPANLVYIDGKPASKLRNDHLVDDLEALIRDKVREKEARERDTIAREA</sequence>
<keyword id="KW-0004">4Fe-4S</keyword>
<keyword id="KW-0408">Iron</keyword>
<keyword id="KW-0411">Iron-sulfur</keyword>
<keyword id="KW-0414">Isoprene biosynthesis</keyword>
<keyword id="KW-0479">Metal-binding</keyword>
<keyword id="KW-0560">Oxidoreductase</keyword>
<keyword id="KW-1185">Reference proteome</keyword>
<proteinExistence type="inferred from homology"/>
<evidence type="ECO:0000255" key="1">
    <source>
        <dbReference type="HAMAP-Rule" id="MF_00159"/>
    </source>
</evidence>